<reference key="1">
    <citation type="journal article" date="2005" name="Nature">
        <title>Genomic sequence of the pathogenic and allergenic filamentous fungus Aspergillus fumigatus.</title>
        <authorList>
            <person name="Nierman W.C."/>
            <person name="Pain A."/>
            <person name="Anderson M.J."/>
            <person name="Wortman J.R."/>
            <person name="Kim H.S."/>
            <person name="Arroyo J."/>
            <person name="Berriman M."/>
            <person name="Abe K."/>
            <person name="Archer D.B."/>
            <person name="Bermejo C."/>
            <person name="Bennett J.W."/>
            <person name="Bowyer P."/>
            <person name="Chen D."/>
            <person name="Collins M."/>
            <person name="Coulsen R."/>
            <person name="Davies R."/>
            <person name="Dyer P.S."/>
            <person name="Farman M.L."/>
            <person name="Fedorova N."/>
            <person name="Fedorova N.D."/>
            <person name="Feldblyum T.V."/>
            <person name="Fischer R."/>
            <person name="Fosker N."/>
            <person name="Fraser A."/>
            <person name="Garcia J.L."/>
            <person name="Garcia M.J."/>
            <person name="Goble A."/>
            <person name="Goldman G.H."/>
            <person name="Gomi K."/>
            <person name="Griffith-Jones S."/>
            <person name="Gwilliam R."/>
            <person name="Haas B.J."/>
            <person name="Haas H."/>
            <person name="Harris D.E."/>
            <person name="Horiuchi H."/>
            <person name="Huang J."/>
            <person name="Humphray S."/>
            <person name="Jimenez J."/>
            <person name="Keller N."/>
            <person name="Khouri H."/>
            <person name="Kitamoto K."/>
            <person name="Kobayashi T."/>
            <person name="Konzack S."/>
            <person name="Kulkarni R."/>
            <person name="Kumagai T."/>
            <person name="Lafton A."/>
            <person name="Latge J.-P."/>
            <person name="Li W."/>
            <person name="Lord A."/>
            <person name="Lu C."/>
            <person name="Majoros W.H."/>
            <person name="May G.S."/>
            <person name="Miller B.L."/>
            <person name="Mohamoud Y."/>
            <person name="Molina M."/>
            <person name="Monod M."/>
            <person name="Mouyna I."/>
            <person name="Mulligan S."/>
            <person name="Murphy L.D."/>
            <person name="O'Neil S."/>
            <person name="Paulsen I."/>
            <person name="Penalva M.A."/>
            <person name="Pertea M."/>
            <person name="Price C."/>
            <person name="Pritchard B.L."/>
            <person name="Quail M.A."/>
            <person name="Rabbinowitsch E."/>
            <person name="Rawlins N."/>
            <person name="Rajandream M.A."/>
            <person name="Reichard U."/>
            <person name="Renauld H."/>
            <person name="Robson G.D."/>
            <person name="Rodriguez de Cordoba S."/>
            <person name="Rodriguez-Pena J.M."/>
            <person name="Ronning C.M."/>
            <person name="Rutter S."/>
            <person name="Salzberg S.L."/>
            <person name="Sanchez M."/>
            <person name="Sanchez-Ferrero J.C."/>
            <person name="Saunders D."/>
            <person name="Seeger K."/>
            <person name="Squares R."/>
            <person name="Squares S."/>
            <person name="Takeuchi M."/>
            <person name="Tekaia F."/>
            <person name="Turner G."/>
            <person name="Vazquez de Aldana C.R."/>
            <person name="Weidman J."/>
            <person name="White O."/>
            <person name="Woodward J.R."/>
            <person name="Yu J.-H."/>
            <person name="Fraser C.M."/>
            <person name="Galagan J.E."/>
            <person name="Asai K."/>
            <person name="Machida M."/>
            <person name="Hall N."/>
            <person name="Barrell B.G."/>
            <person name="Denning D.W."/>
        </authorList>
    </citation>
    <scope>NUCLEOTIDE SEQUENCE [LARGE SCALE GENOMIC DNA]</scope>
    <source>
        <strain>ATCC MYA-4609 / CBS 101355 / FGSC A1100 / Af293</strain>
    </source>
</reference>
<reference key="2">
    <citation type="journal article" date="2002" name="Fungal Genet. Biol.">
        <title>Increased expression of a novel Aspergillus fumigatus ABC transporter gene, atrF, in the presence of itraconazole in an itraconazole resistant clinical isolate.</title>
        <authorList>
            <person name="Slaven J.W."/>
            <person name="Anderson M.J."/>
            <person name="Sanglard D."/>
            <person name="Dixon G.K."/>
            <person name="Bille J."/>
            <person name="Roberts I.S."/>
            <person name="Denning D.W."/>
        </authorList>
    </citation>
    <scope>IDENTIFICATION</scope>
    <scope>INDUCTION</scope>
</reference>
<reference key="3">
    <citation type="journal article" date="2004" name="Antimicrob. Agents Chemother.">
        <title>In vitro evolution of itraconazole resistance in Aspergillus fumigatus involves multiple mechanisms of resistance.</title>
        <authorList>
            <person name="da Silva Ferreira M.E."/>
            <person name="Capellaro J.L."/>
            <person name="dos Reis Marques E."/>
            <person name="Malavazi I."/>
            <person name="Perlin D."/>
            <person name="Park S."/>
            <person name="Anderson J.B."/>
            <person name="Colombo A.L."/>
            <person name="Arthington-Skaggs B.A."/>
            <person name="Goldman M.H."/>
            <person name="Goldman G.H."/>
        </authorList>
    </citation>
    <scope>INDUCTION</scope>
</reference>
<reference key="4">
    <citation type="journal article" date="2016" name="Med. Mycol.">
        <title>Identification of Aspergillus fumigatus multidrug transporter genes and their potential involvement in antifungal resistance.</title>
        <authorList>
            <person name="Meneau I."/>
            <person name="Coste A.T."/>
            <person name="Sanglard D."/>
        </authorList>
    </citation>
    <scope>FUNCTION</scope>
    <scope>INDUCTION</scope>
    <scope>CATALYTIC ACTIVITY</scope>
</reference>
<reference key="5">
    <citation type="journal article" date="2017" name="Microb. Drug Resist.">
        <title>Synergistic effects of tetrandrine with posaconazole against Aspergillus fumigatus.</title>
        <authorList>
            <person name="Li S.X."/>
            <person name="Song Y.J."/>
            <person name="Jiang L."/>
            <person name="Zhao Y.J."/>
            <person name="Guo H."/>
            <person name="Li D.M."/>
            <person name="Zhu K.J."/>
            <person name="Zhang H."/>
        </authorList>
    </citation>
    <scope>FUNCTION</scope>
    <scope>INDUCTION</scope>
</reference>
<reference key="6">
    <citation type="journal article" date="2018" name="Environ. Microbiol.">
        <title>Prevalence, mechanisms and genetic relatedness of the human pathogenic fungus Aspergillus fumigatus exhibiting resistance to medical azoles in the environment of Taiwan.</title>
        <authorList>
            <person name="Wang H.C."/>
            <person name="Huang J.C."/>
            <person name="Lin Y.H."/>
            <person name="Chen Y.H."/>
            <person name="Hsieh M.I."/>
            <person name="Choi P.C."/>
            <person name="Lo H.J."/>
            <person name="Liu W.L."/>
            <person name="Hsu C.S."/>
            <person name="Shih H.I."/>
            <person name="Wu C.J."/>
            <person name="Chen Y.C."/>
        </authorList>
    </citation>
    <scope>INDUCTION</scope>
</reference>
<gene>
    <name evidence="10" type="primary">atrF</name>
    <name type="ORF">AFUA_6G04360</name>
</gene>
<evidence type="ECO:0000255" key="1"/>
<evidence type="ECO:0000255" key="2">
    <source>
        <dbReference type="PROSITE-ProRule" id="PRU00434"/>
    </source>
</evidence>
<evidence type="ECO:0000255" key="3">
    <source>
        <dbReference type="PROSITE-ProRule" id="PRU00498"/>
    </source>
</evidence>
<evidence type="ECO:0000256" key="4">
    <source>
        <dbReference type="SAM" id="MobiDB-lite"/>
    </source>
</evidence>
<evidence type="ECO:0000269" key="5">
    <source>
    </source>
</evidence>
<evidence type="ECO:0000269" key="6">
    <source>
    </source>
</evidence>
<evidence type="ECO:0000269" key="7">
    <source>
    </source>
</evidence>
<evidence type="ECO:0000269" key="8">
    <source>
    </source>
</evidence>
<evidence type="ECO:0000269" key="9">
    <source>
    </source>
</evidence>
<evidence type="ECO:0000303" key="10">
    <source>
    </source>
</evidence>
<evidence type="ECO:0000305" key="11"/>
<organism>
    <name type="scientific">Aspergillus fumigatus (strain ATCC MYA-4609 / CBS 101355 / FGSC A1100 / Af293)</name>
    <name type="common">Neosartorya fumigata</name>
    <dbReference type="NCBI Taxonomy" id="330879"/>
    <lineage>
        <taxon>Eukaryota</taxon>
        <taxon>Fungi</taxon>
        <taxon>Dikarya</taxon>
        <taxon>Ascomycota</taxon>
        <taxon>Pezizomycotina</taxon>
        <taxon>Eurotiomycetes</taxon>
        <taxon>Eurotiomycetidae</taxon>
        <taxon>Eurotiales</taxon>
        <taxon>Aspergillaceae</taxon>
        <taxon>Aspergillus</taxon>
        <taxon>Aspergillus subgen. Fumigati</taxon>
    </lineage>
</organism>
<sequence length="1547" mass="173257">MADGSRLPESATSTTMETNTNEHAKVLSPDAETVPSSSMTATSSELSLDGRWGERDQGEPVSRRGAMEDFEEMRRELTQLSLRRTRSVGKDAHRLRSRASGRASQVHDEEKAIDEEDSTIDGDGDGYQGGFDLGEFLMGGHLERRTTTGEPAKKVGVLFKHLTVKGVETGASFVRTLPDAVVGTFGPDLYRIVCSFIPQLRFGKQPPVRELLHDFTGLVREGEMMLVLGRPGAGCSTFLKTIANDRGAFAGVEGEVRYGGLSAEEQLKHFRGEVNYNPEDDQHFPSLTVWQTLKFSLINKTKKHDKNSIPIIIDALLKMFGITHTKNTLVGNEYVRGVSGGERKRVSIAETLATKSSVVCWDNSTRGLDASTALDYAKSLRIMTDVSKRTTFVTLYQAGESIYELMDKVLVIDSGRMLYQGPANKAREYFVNLGFHCPEKSTTADFLTSICDPNARQFQPGREASTPKTPEELEAVFRNSETYKTICDEVASYEKKLQDTDQEDTRRFQKTVAQSKSRTVSKKSSYTVSFARQVLACVQREFWLLWGDKTSLYTKYFIIISNALIVSSLFYGESLDTSGAFSRGGALFFSILFLGWLQLTELMPAVTGRGIVARHKEYAFYRPSAVSIARVVMDFPAIFCMVVPFTIIMYFMTGLDVTASKFFIYFLFVYTTTFSITSLYRMFAALSPTIDDAVRFSGIALNILVIFVGYVIPKQGLIDGSIWFGWLFYVNPIAYSYEAVLTNEFSDRIMDCAPSQLVPQGPGVDPRYQGCALPGSELGRRGVSGSRYLEESFQFTRSHLWRNFGVVIAFTVLYLIVTVLAAEFLSFVGGGGGALVFKRSKRAKKLATQTTQGNDEEKVQDVGDKAALSRGEAMSASNGESFKRISSSDRIFTWSNVEYTVPYGNGTRKLLNGVNGYAKPGVMIALMGASGAGKTTLLNTLAQRQKMGVVTGDFLVDGRPLGADFQRGTGFCEQMDLHDNTSTIREALEFSALLRQDRNVSKQEKLDYVDQIIDLLELNDIQDAIIGSLNVEQKKRVTIGVELAAKPSLLLFLDEPTSGLDSQAAFSIVRFLKKLSLAGQAILCTIHQPSSMLIQQFDMILALNPGGNTFYFGPVGHDGGDVIKYFADRGVVCPPSKNVAEFILETAAKATTTKDGKKIDWNEEWRNSEQNQRVLDEIQQIREERSKIPVTETGSPYEFAASTMTQTLLLTKRIFRQYWRDPSYYYGKLFVSVIIGIFNGFTFWMLGNSIANMQDRMFSIFLIIMIPPVVLNSIVPKFYINRALWEAREYPSRIYGWFAFCTANIVCEIPMAIVSSLIYWLLWYYPVGFPTDSSTAGYVFLMSMLFFLFMSSWGQWICAFAPSFTVISNVLPFFFVMCNLFNGIVRPYRDYPVFWKYWMYYVNPVTWWLRGVISSIFPTVQIDCSPSETTHFNPPPGQTCANYAGNFITNIAKNGYLLNPDASADCQYCPYSNGAEYMATLNVHDGDKWRCFGIFLAFVIINWLLVYFFIYTVRVRGWSFGMGYLFGGMGLVIDKVKGVFKRKSEKA</sequence>
<protein>
    <recommendedName>
        <fullName>ABC multidrug transporter atrF</fullName>
    </recommendedName>
</protein>
<feature type="chain" id="PRO_0000445100" description="ABC multidrug transporter atrF">
    <location>
        <begin position="1"/>
        <end position="1547"/>
    </location>
</feature>
<feature type="transmembrane region" description="Helical" evidence="1">
    <location>
        <begin position="552"/>
        <end position="572"/>
    </location>
</feature>
<feature type="transmembrane region" description="Helical" evidence="1">
    <location>
        <begin position="586"/>
        <end position="606"/>
    </location>
</feature>
<feature type="transmembrane region" description="Helical" evidence="1">
    <location>
        <begin position="635"/>
        <end position="655"/>
    </location>
</feature>
<feature type="transmembrane region" description="Helical" evidence="1">
    <location>
        <begin position="657"/>
        <end position="677"/>
    </location>
</feature>
<feature type="transmembrane region" description="Helical" evidence="1">
    <location>
        <begin position="698"/>
        <end position="718"/>
    </location>
</feature>
<feature type="transmembrane region" description="Helical" evidence="1">
    <location>
        <begin position="722"/>
        <end position="742"/>
    </location>
</feature>
<feature type="transmembrane region" description="Helical" evidence="1">
    <location>
        <begin position="804"/>
        <end position="824"/>
    </location>
</feature>
<feature type="transmembrane region" description="Helical" evidence="1">
    <location>
        <begin position="1230"/>
        <end position="1250"/>
    </location>
</feature>
<feature type="transmembrane region" description="Helical" evidence="1">
    <location>
        <begin position="1260"/>
        <end position="1280"/>
    </location>
</feature>
<feature type="transmembrane region" description="Helical" evidence="1">
    <location>
        <begin position="1309"/>
        <end position="1329"/>
    </location>
</feature>
<feature type="transmembrane region" description="Helical" evidence="1">
    <location>
        <begin position="1334"/>
        <end position="1354"/>
    </location>
</feature>
<feature type="transmembrane region" description="Helical" evidence="1">
    <location>
        <begin position="1356"/>
        <end position="1376"/>
    </location>
</feature>
<feature type="transmembrane region" description="Helical" evidence="1">
    <location>
        <begin position="1397"/>
        <end position="1417"/>
    </location>
</feature>
<feature type="transmembrane region" description="Helical" evidence="1">
    <location>
        <begin position="1491"/>
        <end position="1511"/>
    </location>
</feature>
<feature type="transmembrane region" description="Helical" evidence="1">
    <location>
        <begin position="1520"/>
        <end position="1540"/>
    </location>
</feature>
<feature type="domain" description="ABC transporter 1" evidence="2">
    <location>
        <begin position="197"/>
        <end position="439"/>
    </location>
</feature>
<feature type="domain" description="ABC transporter 2" evidence="2">
    <location>
        <begin position="892"/>
        <end position="1130"/>
    </location>
</feature>
<feature type="region of interest" description="Disordered" evidence="4">
    <location>
        <begin position="1"/>
        <end position="66"/>
    </location>
</feature>
<feature type="region of interest" description="Disordered" evidence="4">
    <location>
        <begin position="85"/>
        <end position="123"/>
    </location>
</feature>
<feature type="compositionally biased region" description="Polar residues" evidence="4">
    <location>
        <begin position="10"/>
        <end position="19"/>
    </location>
</feature>
<feature type="compositionally biased region" description="Low complexity" evidence="4">
    <location>
        <begin position="36"/>
        <end position="47"/>
    </location>
</feature>
<feature type="compositionally biased region" description="Basic and acidic residues" evidence="4">
    <location>
        <begin position="51"/>
        <end position="66"/>
    </location>
</feature>
<feature type="compositionally biased region" description="Acidic residues" evidence="4">
    <location>
        <begin position="111"/>
        <end position="123"/>
    </location>
</feature>
<feature type="binding site" evidence="2">
    <location>
        <begin position="928"/>
        <end position="935"/>
    </location>
    <ligand>
        <name>ATP</name>
        <dbReference type="ChEBI" id="CHEBI:30616"/>
    </ligand>
</feature>
<feature type="glycosylation site" description="N-linked (GlcNAc...) asparagine" evidence="3">
    <location>
        <position position="299"/>
    </location>
</feature>
<feature type="glycosylation site" description="N-linked (GlcNAc...) asparagine" evidence="3">
    <location>
        <position position="363"/>
    </location>
</feature>
<feature type="glycosylation site" description="N-linked (GlcNAc...) asparagine" evidence="3">
    <location>
        <position position="905"/>
    </location>
</feature>
<feature type="glycosylation site" description="N-linked (GlcNAc...) asparagine" evidence="3">
    <location>
        <position position="980"/>
    </location>
</feature>
<feature type="glycosylation site" description="N-linked (GlcNAc...) asparagine" evidence="3">
    <location>
        <position position="999"/>
    </location>
</feature>
<accession>Q4WDD4</accession>
<proteinExistence type="evidence at protein level"/>
<keyword id="KW-0067">ATP-binding</keyword>
<keyword id="KW-1003">Cell membrane</keyword>
<keyword id="KW-0325">Glycoprotein</keyword>
<keyword id="KW-0378">Hydrolase</keyword>
<keyword id="KW-0472">Membrane</keyword>
<keyword id="KW-0547">Nucleotide-binding</keyword>
<keyword id="KW-1185">Reference proteome</keyword>
<keyword id="KW-0677">Repeat</keyword>
<keyword id="KW-0812">Transmembrane</keyword>
<keyword id="KW-1133">Transmembrane helix</keyword>
<keyword id="KW-0813">Transport</keyword>
<comment type="function">
    <text evidence="7 8">Pleiotropic ABC efflux transporter involved in the basal level of azole susceptibility (PubMed:26933209, PubMed:28080217). Confers resistance to fluconazole and voriconazole (PubMed:26933209).</text>
</comment>
<comment type="catalytic activity">
    <reaction evidence="7">
        <text>voriconazole(in) + ATP + H2O = voriconazole(out) + ADP + phosphate + H(+)</text>
        <dbReference type="Rhea" id="RHEA:61912"/>
        <dbReference type="ChEBI" id="CHEBI:10023"/>
        <dbReference type="ChEBI" id="CHEBI:15377"/>
        <dbReference type="ChEBI" id="CHEBI:15378"/>
        <dbReference type="ChEBI" id="CHEBI:30616"/>
        <dbReference type="ChEBI" id="CHEBI:43474"/>
        <dbReference type="ChEBI" id="CHEBI:456216"/>
    </reaction>
    <physiologicalReaction direction="left-to-right" evidence="7">
        <dbReference type="Rhea" id="RHEA:61913"/>
    </physiologicalReaction>
</comment>
<comment type="catalytic activity">
    <reaction evidence="7">
        <text>fluconazole(in) + ATP + H2O = fluconazole(out) + ADP + phosphate + H(+)</text>
        <dbReference type="Rhea" id="RHEA:61916"/>
        <dbReference type="ChEBI" id="CHEBI:15377"/>
        <dbReference type="ChEBI" id="CHEBI:15378"/>
        <dbReference type="ChEBI" id="CHEBI:30616"/>
        <dbReference type="ChEBI" id="CHEBI:43474"/>
        <dbReference type="ChEBI" id="CHEBI:46081"/>
        <dbReference type="ChEBI" id="CHEBI:456216"/>
    </reaction>
</comment>
<comment type="subcellular location">
    <subcellularLocation>
        <location evidence="11">Cell membrane</location>
        <topology evidence="1">Multi-pass membrane protein</topology>
    </subcellularLocation>
</comment>
<comment type="induction">
    <text evidence="5 6 7 8 9">Expression is induced upon voriconazole treatment (PubMed:12135575, PubMed:15504870). Expression is increased in clinical azole-resistant isolates (PubMed:26933209, PubMed:28080217, PubMed:29124846). Expression is down-regulated by tetrandrine and posaconazole in a synergistic manner (PubMed:28080217).</text>
</comment>
<comment type="similarity">
    <text evidence="11">Belongs to the ABC transporter superfamily. ABCG family. PDR (TC 3.A.1.205) subfamily.</text>
</comment>
<dbReference type="EMBL" id="AAHF01000012">
    <property type="protein sequence ID" value="EAL85604.1"/>
    <property type="molecule type" value="Genomic_DNA"/>
</dbReference>
<dbReference type="RefSeq" id="XP_747642.1">
    <property type="nucleotide sequence ID" value="XM_742549.1"/>
</dbReference>
<dbReference type="SMR" id="Q4WDD4"/>
<dbReference type="STRING" id="330879.Q4WDD4"/>
<dbReference type="TCDB" id="3.A.1.205.30">
    <property type="family name" value="the atp-binding cassette (abc) superfamily"/>
</dbReference>
<dbReference type="GlyCosmos" id="Q4WDD4">
    <property type="glycosylation" value="5 sites, No reported glycans"/>
</dbReference>
<dbReference type="EnsemblFungi" id="EAL85604">
    <property type="protein sequence ID" value="EAL85604"/>
    <property type="gene ID" value="AFUA_6G04360"/>
</dbReference>
<dbReference type="GeneID" id="3505316"/>
<dbReference type="KEGG" id="afm:AFUA_6G04360"/>
<dbReference type="VEuPathDB" id="FungiDB:Afu6g04360"/>
<dbReference type="eggNOG" id="KOG0065">
    <property type="taxonomic scope" value="Eukaryota"/>
</dbReference>
<dbReference type="HOGENOM" id="CLU_000604_35_0_1"/>
<dbReference type="InParanoid" id="Q4WDD4"/>
<dbReference type="OMA" id="FCISNWA"/>
<dbReference type="OrthoDB" id="245989at2759"/>
<dbReference type="Proteomes" id="UP000002530">
    <property type="component" value="Chromosome 6"/>
</dbReference>
<dbReference type="GO" id="GO:0005886">
    <property type="term" value="C:plasma membrane"/>
    <property type="evidence" value="ECO:0007669"/>
    <property type="project" value="UniProtKB-SubCell"/>
</dbReference>
<dbReference type="GO" id="GO:0140359">
    <property type="term" value="F:ABC-type transporter activity"/>
    <property type="evidence" value="ECO:0007669"/>
    <property type="project" value="InterPro"/>
</dbReference>
<dbReference type="GO" id="GO:0005524">
    <property type="term" value="F:ATP binding"/>
    <property type="evidence" value="ECO:0007669"/>
    <property type="project" value="UniProtKB-KW"/>
</dbReference>
<dbReference type="GO" id="GO:0016887">
    <property type="term" value="F:ATP hydrolysis activity"/>
    <property type="evidence" value="ECO:0007669"/>
    <property type="project" value="InterPro"/>
</dbReference>
<dbReference type="CDD" id="cd03233">
    <property type="entry name" value="ABCG_PDR_domain1"/>
    <property type="match status" value="1"/>
</dbReference>
<dbReference type="CDD" id="cd03232">
    <property type="entry name" value="ABCG_PDR_domain2"/>
    <property type="match status" value="1"/>
</dbReference>
<dbReference type="FunFam" id="3.40.50.300:FF:001650">
    <property type="entry name" value="ABC drug exporter AtrF"/>
    <property type="match status" value="1"/>
</dbReference>
<dbReference type="FunFam" id="3.40.50.300:FF:000054">
    <property type="entry name" value="ABC multidrug transporter atrF"/>
    <property type="match status" value="1"/>
</dbReference>
<dbReference type="Gene3D" id="3.40.50.300">
    <property type="entry name" value="P-loop containing nucleotide triphosphate hydrolases"/>
    <property type="match status" value="2"/>
</dbReference>
<dbReference type="InterPro" id="IPR003593">
    <property type="entry name" value="AAA+_ATPase"/>
</dbReference>
<dbReference type="InterPro" id="IPR013525">
    <property type="entry name" value="ABC2_TM"/>
</dbReference>
<dbReference type="InterPro" id="IPR029481">
    <property type="entry name" value="ABC_trans_N"/>
</dbReference>
<dbReference type="InterPro" id="IPR003439">
    <property type="entry name" value="ABC_transporter-like_ATP-bd"/>
</dbReference>
<dbReference type="InterPro" id="IPR017871">
    <property type="entry name" value="ABC_transporter-like_CS"/>
</dbReference>
<dbReference type="InterPro" id="IPR034001">
    <property type="entry name" value="ABCG_PDR_1"/>
</dbReference>
<dbReference type="InterPro" id="IPR034003">
    <property type="entry name" value="ABCG_PDR_2"/>
</dbReference>
<dbReference type="InterPro" id="IPR027417">
    <property type="entry name" value="P-loop_NTPase"/>
</dbReference>
<dbReference type="InterPro" id="IPR010929">
    <property type="entry name" value="PDR_CDR_ABC"/>
</dbReference>
<dbReference type="PANTHER" id="PTHR19241">
    <property type="entry name" value="ATP-BINDING CASSETTE TRANSPORTER"/>
    <property type="match status" value="1"/>
</dbReference>
<dbReference type="Pfam" id="PF01061">
    <property type="entry name" value="ABC2_membrane"/>
    <property type="match status" value="2"/>
</dbReference>
<dbReference type="Pfam" id="PF00005">
    <property type="entry name" value="ABC_tran"/>
    <property type="match status" value="2"/>
</dbReference>
<dbReference type="Pfam" id="PF14510">
    <property type="entry name" value="ABC_trans_N"/>
    <property type="match status" value="1"/>
</dbReference>
<dbReference type="Pfam" id="PF06422">
    <property type="entry name" value="PDR_CDR"/>
    <property type="match status" value="1"/>
</dbReference>
<dbReference type="SMART" id="SM00382">
    <property type="entry name" value="AAA"/>
    <property type="match status" value="2"/>
</dbReference>
<dbReference type="SUPFAM" id="SSF52540">
    <property type="entry name" value="P-loop containing nucleoside triphosphate hydrolases"/>
    <property type="match status" value="2"/>
</dbReference>
<dbReference type="PROSITE" id="PS00211">
    <property type="entry name" value="ABC_TRANSPORTER_1"/>
    <property type="match status" value="1"/>
</dbReference>
<dbReference type="PROSITE" id="PS50893">
    <property type="entry name" value="ABC_TRANSPORTER_2"/>
    <property type="match status" value="2"/>
</dbReference>
<name>ATRF_ASPFU</name>